<evidence type="ECO:0000250" key="1"/>
<evidence type="ECO:0000255" key="2">
    <source>
        <dbReference type="PROSITE-ProRule" id="PRU00274"/>
    </source>
</evidence>
<evidence type="ECO:0000269" key="3">
    <source>
    </source>
</evidence>
<evidence type="ECO:0000269" key="4">
    <source>
    </source>
</evidence>
<evidence type="ECO:0000305" key="5"/>
<sequence length="246" mass="27013">MQALLFLMALLLPSGAGAEEIIGGVEARPHSRPYMAHLKIITDRGSEDRCGGFLIAPQFVLTAAHCKGREITVTLGAHDVSKSESTQQRIKVEKQIIHKNYNVSFNLYDIMLLKLEEKAELTPTVDVIPLPGPSDFIDPGKMCWTAGWGKTGEKEPTSETLREVELRIMDKEACKMYKHYDYNFQVCVGSSTKLKTAYMGDSGGPLLCAGVAHGIVSYGDSHGKPPAVFTRISAYVPWIKTVINGK</sequence>
<gene>
    <name type="primary">Mcpt1</name>
</gene>
<dbReference type="EC" id="3.4.21.-"/>
<dbReference type="EMBL" id="S44609">
    <property type="protein sequence ID" value="AAB23194.1"/>
    <property type="molecule type" value="mRNA"/>
</dbReference>
<dbReference type="EMBL" id="X68803">
    <property type="protein sequence ID" value="CAA48703.1"/>
    <property type="molecule type" value="Genomic_DNA"/>
</dbReference>
<dbReference type="CCDS" id="CCDS27137.1"/>
<dbReference type="PIR" id="A46504">
    <property type="entry name" value="A46504"/>
</dbReference>
<dbReference type="RefSeq" id="NP_032596.1">
    <property type="nucleotide sequence ID" value="NM_008570.1"/>
</dbReference>
<dbReference type="SMR" id="P11034"/>
<dbReference type="FunCoup" id="P11034">
    <property type="interactions" value="182"/>
</dbReference>
<dbReference type="STRING" id="10090.ENSMUSP00000022836"/>
<dbReference type="MEROPS" id="S01.458"/>
<dbReference type="GlyCosmos" id="P11034">
    <property type="glycosylation" value="1 site, No reported glycans"/>
</dbReference>
<dbReference type="GlyGen" id="P11034">
    <property type="glycosylation" value="1 site, 1 N-linked glycan (1 site)"/>
</dbReference>
<dbReference type="CPTAC" id="non-CPTAC-3473"/>
<dbReference type="PaxDb" id="10090-ENSMUSP00000022836"/>
<dbReference type="PeptideAtlas" id="P11034"/>
<dbReference type="ProteomicsDB" id="292196"/>
<dbReference type="DNASU" id="17224"/>
<dbReference type="Ensembl" id="ENSMUST00000022836.6">
    <property type="protein sequence ID" value="ENSMUSP00000022836.5"/>
    <property type="gene ID" value="ENSMUSG00000022227.6"/>
</dbReference>
<dbReference type="GeneID" id="17224"/>
<dbReference type="KEGG" id="mmu:17224"/>
<dbReference type="UCSC" id="uc007ubi.1">
    <property type="organism name" value="mouse"/>
</dbReference>
<dbReference type="AGR" id="MGI:96937"/>
<dbReference type="CTD" id="17224"/>
<dbReference type="MGI" id="MGI:96937">
    <property type="gene designation" value="Mcpt1"/>
</dbReference>
<dbReference type="VEuPathDB" id="HostDB:ENSMUSG00000022227"/>
<dbReference type="eggNOG" id="KOG3627">
    <property type="taxonomic scope" value="Eukaryota"/>
</dbReference>
<dbReference type="GeneTree" id="ENSGT01030000234551"/>
<dbReference type="HOGENOM" id="CLU_006842_1_0_1"/>
<dbReference type="InParanoid" id="P11034"/>
<dbReference type="OMA" id="RYSERTW"/>
<dbReference type="OrthoDB" id="5565075at2759"/>
<dbReference type="PhylomeDB" id="P11034"/>
<dbReference type="TreeFam" id="TF333630"/>
<dbReference type="BioGRID-ORCS" id="17224">
    <property type="hits" value="1 hit in 76 CRISPR screens"/>
</dbReference>
<dbReference type="PRO" id="PR:P11034"/>
<dbReference type="Proteomes" id="UP000000589">
    <property type="component" value="Chromosome 14"/>
</dbReference>
<dbReference type="RNAct" id="P11034">
    <property type="molecule type" value="protein"/>
</dbReference>
<dbReference type="Bgee" id="ENSMUSG00000022227">
    <property type="expression patterns" value="Expressed in skin of snout and 65 other cell types or tissues"/>
</dbReference>
<dbReference type="ExpressionAtlas" id="P11034">
    <property type="expression patterns" value="baseline and differential"/>
</dbReference>
<dbReference type="GO" id="GO:0005615">
    <property type="term" value="C:extracellular space"/>
    <property type="evidence" value="ECO:0000314"/>
    <property type="project" value="MGI"/>
</dbReference>
<dbReference type="GO" id="GO:0004252">
    <property type="term" value="F:serine-type endopeptidase activity"/>
    <property type="evidence" value="ECO:0007669"/>
    <property type="project" value="InterPro"/>
</dbReference>
<dbReference type="GO" id="GO:0071466">
    <property type="term" value="P:cellular response to xenobiotic stimulus"/>
    <property type="evidence" value="ECO:0000314"/>
    <property type="project" value="MGI"/>
</dbReference>
<dbReference type="GO" id="GO:0006508">
    <property type="term" value="P:proteolysis"/>
    <property type="evidence" value="ECO:0007669"/>
    <property type="project" value="UniProtKB-KW"/>
</dbReference>
<dbReference type="CDD" id="cd00190">
    <property type="entry name" value="Tryp_SPc"/>
    <property type="match status" value="1"/>
</dbReference>
<dbReference type="FunFam" id="2.40.10.10:FF:000014">
    <property type="entry name" value="Complement factor D"/>
    <property type="match status" value="1"/>
</dbReference>
<dbReference type="FunFam" id="2.40.10.10:FF:000068">
    <property type="entry name" value="transmembrane protease serine 2"/>
    <property type="match status" value="1"/>
</dbReference>
<dbReference type="Gene3D" id="2.40.10.10">
    <property type="entry name" value="Trypsin-like serine proteases"/>
    <property type="match status" value="2"/>
</dbReference>
<dbReference type="InterPro" id="IPR009003">
    <property type="entry name" value="Peptidase_S1_PA"/>
</dbReference>
<dbReference type="InterPro" id="IPR043504">
    <property type="entry name" value="Peptidase_S1_PA_chymotrypsin"/>
</dbReference>
<dbReference type="InterPro" id="IPR001314">
    <property type="entry name" value="Peptidase_S1A"/>
</dbReference>
<dbReference type="InterPro" id="IPR001254">
    <property type="entry name" value="Trypsin_dom"/>
</dbReference>
<dbReference type="InterPro" id="IPR018114">
    <property type="entry name" value="TRYPSIN_HIS"/>
</dbReference>
<dbReference type="InterPro" id="IPR033116">
    <property type="entry name" value="TRYPSIN_SER"/>
</dbReference>
<dbReference type="PANTHER" id="PTHR24271:SF23">
    <property type="entry name" value="CHYMASE 2, MAST CELL-RELATED"/>
    <property type="match status" value="1"/>
</dbReference>
<dbReference type="PANTHER" id="PTHR24271">
    <property type="entry name" value="KALLIKREIN-RELATED"/>
    <property type="match status" value="1"/>
</dbReference>
<dbReference type="Pfam" id="PF00089">
    <property type="entry name" value="Trypsin"/>
    <property type="match status" value="1"/>
</dbReference>
<dbReference type="PRINTS" id="PR00722">
    <property type="entry name" value="CHYMOTRYPSIN"/>
</dbReference>
<dbReference type="SMART" id="SM00020">
    <property type="entry name" value="Tryp_SPc"/>
    <property type="match status" value="1"/>
</dbReference>
<dbReference type="SUPFAM" id="SSF50494">
    <property type="entry name" value="Trypsin-like serine proteases"/>
    <property type="match status" value="1"/>
</dbReference>
<dbReference type="PROSITE" id="PS50240">
    <property type="entry name" value="TRYPSIN_DOM"/>
    <property type="match status" value="1"/>
</dbReference>
<dbReference type="PROSITE" id="PS00134">
    <property type="entry name" value="TRYPSIN_HIS"/>
    <property type="match status" value="1"/>
</dbReference>
<dbReference type="PROSITE" id="PS00135">
    <property type="entry name" value="TRYPSIN_SER"/>
    <property type="match status" value="1"/>
</dbReference>
<proteinExistence type="evidence at protein level"/>
<name>MCPT1_MOUSE</name>
<reference key="1">
    <citation type="journal article" date="1992" name="J. Immunol.">
        <title>IL-10 induces transcription of the gene for mouse mast cell protease-1, a serine protease preferentially expressed in mucosal mast cells of Trichinella spiralis-infected mice.</title>
        <authorList>
            <person name="Ghildyal N."/>
            <person name="McNeil H.P."/>
            <person name="Stechschulte S."/>
            <person name="Austen K.F."/>
            <person name="Silberstein D."/>
            <person name="Gurish M.F."/>
            <person name="Somerville L.L."/>
            <person name="Stevens R.L."/>
        </authorList>
    </citation>
    <scope>NUCLEOTIDE SEQUENCE</scope>
</reference>
<reference key="2">
    <citation type="journal article" date="1991" name="Eur. J. Immunol.">
        <title>Cloning and structural analysis of MMCP-1, MMCP-4 and MMCP-5, three mouse mast cell-specific serine proteases.</title>
        <authorList>
            <person name="Huang R."/>
            <person name="Blom T."/>
            <person name="Hellman L."/>
        </authorList>
    </citation>
    <scope>NUCLEOTIDE SEQUENCE</scope>
    <source>
        <strain>BALB/cJ</strain>
        <tissue>Liver</tissue>
    </source>
</reference>
<reference key="3">
    <citation type="journal article" date="1989" name="Biochemistry">
        <title>Amino acid sequence of a mouse mucosal mast cell protease.</title>
        <authorList>
            <person name="le Trong H."/>
            <person name="Newlands G.F.J."/>
            <person name="Miller H.R.P."/>
            <person name="Charbonneau H."/>
            <person name="Neurath H."/>
            <person name="Woodbury R.G."/>
        </authorList>
    </citation>
    <scope>PROTEIN SEQUENCE OF 21-246</scope>
</reference>
<reference key="4">
    <citation type="journal article" date="1993" name="Biochem. J.">
        <title>Biochemical and immunological characterization of multiple glycoforms of mouse mast cell protease 1: comparison with an isolated murine serosal mast cell protease (MMCP-4).</title>
        <authorList>
            <person name="Newlands G.F.J."/>
            <person name="Knox D.P."/>
            <person name="Pirie-Shepherd S.R."/>
            <person name="Miller H.R.P."/>
        </authorList>
    </citation>
    <scope>PROTEIN SEQUENCE OF 21-49</scope>
</reference>
<organism>
    <name type="scientific">Mus musculus</name>
    <name type="common">Mouse</name>
    <dbReference type="NCBI Taxonomy" id="10090"/>
    <lineage>
        <taxon>Eukaryota</taxon>
        <taxon>Metazoa</taxon>
        <taxon>Chordata</taxon>
        <taxon>Craniata</taxon>
        <taxon>Vertebrata</taxon>
        <taxon>Euteleostomi</taxon>
        <taxon>Mammalia</taxon>
        <taxon>Eutheria</taxon>
        <taxon>Euarchontoglires</taxon>
        <taxon>Glires</taxon>
        <taxon>Rodentia</taxon>
        <taxon>Myomorpha</taxon>
        <taxon>Muroidea</taxon>
        <taxon>Muridae</taxon>
        <taxon>Murinae</taxon>
        <taxon>Mus</taxon>
        <taxon>Mus</taxon>
    </lineage>
</organism>
<keyword id="KW-0903">Direct protein sequencing</keyword>
<keyword id="KW-1015">Disulfide bond</keyword>
<keyword id="KW-0325">Glycoprotein</keyword>
<keyword id="KW-0378">Hydrolase</keyword>
<keyword id="KW-0645">Protease</keyword>
<keyword id="KW-1185">Reference proteome</keyword>
<keyword id="KW-0964">Secreted</keyword>
<keyword id="KW-0720">Serine protease</keyword>
<keyword id="KW-0732">Signal</keyword>
<keyword id="KW-0865">Zymogen</keyword>
<comment type="function">
    <text>Has a chymotrypsin-like activity.</text>
</comment>
<comment type="subcellular location">
    <subcellularLocation>
        <location>Secreted</location>
    </subcellularLocation>
    <subcellularLocation>
        <location>Cytoplasmic granule</location>
    </subcellularLocation>
    <text>Secretory granules.</text>
</comment>
<comment type="tissue specificity">
    <text>Mucosal mast cells.</text>
</comment>
<comment type="similarity">
    <text evidence="2">Belongs to the peptidase S1 family. Granzyme subfamily.</text>
</comment>
<accession>P11034</accession>
<protein>
    <recommendedName>
        <fullName>Mast cell protease 1</fullName>
        <shortName>mMCP-1</shortName>
        <ecNumber>3.4.21.-</ecNumber>
    </recommendedName>
</protein>
<feature type="signal peptide">
    <location>
        <begin position="1"/>
        <end position="18"/>
    </location>
</feature>
<feature type="propeptide" id="PRO_0000027449" description="Activation peptide" evidence="3 4">
    <location>
        <begin position="19"/>
        <end position="20"/>
    </location>
</feature>
<feature type="chain" id="PRO_0000027450" description="Mast cell protease 1">
    <location>
        <begin position="21"/>
        <end position="246"/>
    </location>
</feature>
<feature type="domain" description="Peptidase S1" evidence="2">
    <location>
        <begin position="21"/>
        <end position="244"/>
    </location>
</feature>
<feature type="active site" description="Charge relay system" evidence="1">
    <location>
        <position position="65"/>
    </location>
</feature>
<feature type="active site" description="Charge relay system" evidence="1">
    <location>
        <position position="109"/>
    </location>
</feature>
<feature type="active site" description="Charge relay system" evidence="1">
    <location>
        <position position="202"/>
    </location>
</feature>
<feature type="glycosylation site" description="N-linked (GlcNAc...) asparagine" evidence="5">
    <location>
        <position position="102"/>
    </location>
</feature>
<feature type="disulfide bond" evidence="2">
    <location>
        <begin position="50"/>
        <end position="66"/>
    </location>
</feature>
<feature type="disulfide bond" evidence="2">
    <location>
        <begin position="143"/>
        <end position="208"/>
    </location>
</feature>
<feature type="disulfide bond" evidence="2">
    <location>
        <begin position="174"/>
        <end position="187"/>
    </location>
</feature>